<accession>P49797</accession>
<accession>Q5RKK6</accession>
<accession>Q920Q9</accession>
<comment type="function">
    <text>Down-regulates signaling from heterotrimeric G-proteins by increasing the GTPase activity of the alpha subunits, thereby driving them into their inactive GDP-bound form. Down-regulates G-protein-mediated release of inositol phosphates and activation of MAP kinases.</text>
</comment>
<comment type="subunit">
    <text evidence="1">Binds EFNB1 and EFNB2. Binds the GNB1-GNG2 heterodimer (By similarity). Binds ESR1.</text>
</comment>
<comment type="subcellular location">
    <subcellularLocation>
        <location evidence="2">Cytoplasm</location>
    </subcellularLocation>
    <subcellularLocation>
        <location evidence="2">Membrane</location>
        <topology evidence="2">Peripheral membrane protein</topology>
    </subcellularLocation>
    <subcellularLocation>
        <location evidence="2">Nucleus</location>
    </subcellularLocation>
    <text evidence="2">Long isoforms are cytoplasmic and associated with the plasma membrane. Short isoforms are nuclear.</text>
</comment>
<comment type="alternative products">
    <event type="alternative splicing"/>
    <isoform>
        <id>P49797-1</id>
        <name>1</name>
        <sequence type="displayed"/>
    </isoform>
    <isoform>
        <id>P49797-2</id>
        <name>2</name>
        <sequence type="described" ref="VSP_013971 VSP_013972"/>
    </isoform>
</comment>
<comment type="tissue specificity">
    <text evidence="8 9">Detected in kidney, uterus, ovary, heart, brain, spleen, lung and testis.</text>
</comment>
<comment type="PTM">
    <text evidence="7">Phosphorylated by cyclic GMP-dependent protein kinase.</text>
</comment>
<comment type="PTM">
    <text evidence="1">ISGylated.</text>
</comment>
<proteinExistence type="evidence at protein level"/>
<sequence length="967" mass="106380">MNRFNGLCKVCSERRYRQITIRRGKDGFGFTICCDSPVRVQAVDSGGPAERAGLQQLDTVLQLNERPVEHWKCVELAHEIRSCPSEIILLVWRVVPQIKPGPDGGVLRRASCKSTHDLLSPPNKREKNCTHGAPTRPEQRHSCHLVCDSSDGLLLGGWERYTEVGKRSGQHTLPALSRATTPTDPNYIILAPLNPGSQLLRPVYQEDAIPEEPGTTTKGKSYTGLGKKSRLMKTVQTMKGHSNYQDCSALRPHIPHSSYGTYVTLAPKVLVFPVFVQPLDLCNPARTLLLSEELLLYEGRNKTSQVTLFAYSDLLLFTKEEEPGRCDVLRNPLYLQSVKLQEGSSEDLKFCVLYLAEKAECLFTLEAHSQEQKKRVCWCLSENIAKQQQLAATPTERKMFETEADEKEMPLVEGKGPGAEERTPSKDPSPSQELPPGQELPPSKDPSPSQELPPGQELPPSKDPSPSQELPPGQELPSSKNPSPSQELPAGQDLPPRKESFSGQEAAPGPESPSSEDIATCQNPPQSPETSTSKDSPPGQGSSPTTEVPSCQGLPAGQESTSQDPLLSQEPPAIPESSASDQNVLPSQESPPSQGSLSEKALAEQTISPGELPAATAGEPSASRPNFVIPEVRLDSAYSQQDGAHGGSSGEDEDAEEGEEGEEGEEDEEDDTNDDNYGDRNEAKRSSLIETGQGAEGGLSLRVQNSLRRRTHSEGSLLQEARGPCFASDTTLHCSDGEGTTSTWAIPSPRTLKKELGRNGGSMHHLSLFFTGHRKMSGTDLADDVEASRKRKSKNIAKDMKNKLAIFRRRNESPGAQPAGKADKTTKSFKPTSEEALKWSESLEKLLLHKYGLEVFQAFLRTEFSEENLEFWLACEDFKKVKSQSKMAAKAKKIFAEFIAIQACKEVNLDSYTREHTKENLQSITRGCFDLAQKRIFGLMEKDSYPRFLRSDLYLDLINQKKMSPPL</sequence>
<feature type="chain" id="PRO_0000204184" description="Regulator of G-protein signaling 3">
    <location>
        <begin position="1"/>
        <end position="967"/>
    </location>
</feature>
<feature type="domain" description="PDZ" evidence="4">
    <location>
        <begin position="18"/>
        <end position="95"/>
    </location>
</feature>
<feature type="domain" description="RGS" evidence="5">
    <location>
        <begin position="842"/>
        <end position="967"/>
    </location>
</feature>
<feature type="region of interest" description="Disordered" evidence="6">
    <location>
        <begin position="115"/>
        <end position="135"/>
    </location>
</feature>
<feature type="region of interest" description="Disordered" evidence="6">
    <location>
        <begin position="389"/>
        <end position="705"/>
    </location>
</feature>
<feature type="region of interest" description="Disordered" evidence="6">
    <location>
        <begin position="807"/>
        <end position="830"/>
    </location>
</feature>
<feature type="compositionally biased region" description="Polar residues" evidence="6">
    <location>
        <begin position="476"/>
        <end position="486"/>
    </location>
</feature>
<feature type="compositionally biased region" description="Polar residues" evidence="6">
    <location>
        <begin position="512"/>
        <end position="549"/>
    </location>
</feature>
<feature type="compositionally biased region" description="Polar residues" evidence="6">
    <location>
        <begin position="577"/>
        <end position="597"/>
    </location>
</feature>
<feature type="compositionally biased region" description="Acidic residues" evidence="6">
    <location>
        <begin position="650"/>
        <end position="676"/>
    </location>
</feature>
<feature type="compositionally biased region" description="Basic and acidic residues" evidence="6">
    <location>
        <begin position="677"/>
        <end position="687"/>
    </location>
</feature>
<feature type="compositionally biased region" description="Basic and acidic residues" evidence="6">
    <location>
        <begin position="821"/>
        <end position="830"/>
    </location>
</feature>
<feature type="modified residue" description="Omega-N-methylarginine" evidence="2">
    <location>
        <position position="167"/>
    </location>
</feature>
<feature type="modified residue" description="Phosphoserine" evidence="11">
    <location>
        <position position="713"/>
    </location>
</feature>
<feature type="modified residue" description="Phosphoserine" evidence="11">
    <location>
        <position position="716"/>
    </location>
</feature>
<feature type="modified residue" description="Phosphoserine" evidence="3">
    <location>
        <position position="748"/>
    </location>
</feature>
<feature type="modified residue" description="Phosphoserine" evidence="3">
    <location>
        <position position="777"/>
    </location>
</feature>
<feature type="splice variant" id="VSP_013971" description="In isoform 2." evidence="10">
    <original>MFETEADEKEMPLVEGKGPGAEERTPSKDPSPSQE</original>
    <variation>KLHPYGSLQQEMGPVTSINATQDRSFTSSGQTLIG</variation>
    <location>
        <begin position="399"/>
        <end position="433"/>
    </location>
</feature>
<feature type="splice variant" id="VSP_013972" description="In isoform 2." evidence="10">
    <location>
        <begin position="434"/>
        <end position="967"/>
    </location>
</feature>
<organism>
    <name type="scientific">Rattus norvegicus</name>
    <name type="common">Rat</name>
    <dbReference type="NCBI Taxonomy" id="10116"/>
    <lineage>
        <taxon>Eukaryota</taxon>
        <taxon>Metazoa</taxon>
        <taxon>Chordata</taxon>
        <taxon>Craniata</taxon>
        <taxon>Vertebrata</taxon>
        <taxon>Euteleostomi</taxon>
        <taxon>Mammalia</taxon>
        <taxon>Eutheria</taxon>
        <taxon>Euarchontoglires</taxon>
        <taxon>Glires</taxon>
        <taxon>Rodentia</taxon>
        <taxon>Myomorpha</taxon>
        <taxon>Muroidea</taxon>
        <taxon>Muridae</taxon>
        <taxon>Murinae</taxon>
        <taxon>Rattus</taxon>
    </lineage>
</organism>
<gene>
    <name type="primary">Rgs3</name>
</gene>
<evidence type="ECO:0000250" key="1"/>
<evidence type="ECO:0000250" key="2">
    <source>
        <dbReference type="UniProtKB" id="P49796"/>
    </source>
</evidence>
<evidence type="ECO:0000250" key="3">
    <source>
        <dbReference type="UniProtKB" id="Q9DC04"/>
    </source>
</evidence>
<evidence type="ECO:0000255" key="4">
    <source>
        <dbReference type="PROSITE-ProRule" id="PRU00143"/>
    </source>
</evidence>
<evidence type="ECO:0000255" key="5">
    <source>
        <dbReference type="PROSITE-ProRule" id="PRU00171"/>
    </source>
</evidence>
<evidence type="ECO:0000256" key="6">
    <source>
        <dbReference type="SAM" id="MobiDB-lite"/>
    </source>
</evidence>
<evidence type="ECO:0000269" key="7">
    <source>
    </source>
</evidence>
<evidence type="ECO:0000269" key="8">
    <source>
    </source>
</evidence>
<evidence type="ECO:0000269" key="9">
    <source>
    </source>
</evidence>
<evidence type="ECO:0000303" key="10">
    <source>
    </source>
</evidence>
<evidence type="ECO:0007744" key="11">
    <source>
    </source>
</evidence>
<protein>
    <recommendedName>
        <fullName>Regulator of G-protein signaling 3</fullName>
        <shortName>RGS3</shortName>
    </recommendedName>
    <alternativeName>
        <fullName>SRB-RGS</fullName>
    </alternativeName>
</protein>
<keyword id="KW-0025">Alternative splicing</keyword>
<keyword id="KW-0963">Cytoplasm</keyword>
<keyword id="KW-0472">Membrane</keyword>
<keyword id="KW-0488">Methylation</keyword>
<keyword id="KW-0539">Nucleus</keyword>
<keyword id="KW-0597">Phosphoprotein</keyword>
<keyword id="KW-1185">Reference proteome</keyword>
<keyword id="KW-0734">Signal transduction inhibitor</keyword>
<keyword id="KW-0832">Ubl conjugation</keyword>
<reference key="1">
    <citation type="journal article" date="2001" name="Gene">
        <title>Molecular cloning and characterization of a steroid receptor-binding regulator of G-protein signaling protein cDNA.</title>
        <authorList>
            <person name="Ikeda M."/>
            <person name="Hirokawa M."/>
            <person name="Satani N."/>
            <person name="Kinoshita T."/>
            <person name="Watanabe Y."/>
            <person name="Inoue H."/>
            <person name="Tone S."/>
            <person name="Ishikawa T."/>
            <person name="Minatogawa Y."/>
        </authorList>
    </citation>
    <scope>NUCLEOTIDE SEQUENCE [MRNA] (ISOFORM 1)</scope>
    <scope>INTERACTION WITH ESR1</scope>
    <scope>TISSUE SPECIFICITY</scope>
    <source>
        <tissue>Ovary</tissue>
    </source>
</reference>
<reference key="2">
    <citation type="journal article" date="2004" name="Genome Res.">
        <title>The status, quality, and expansion of the NIH full-length cDNA project: the Mammalian Gene Collection (MGC).</title>
        <authorList>
            <consortium name="The MGC Project Team"/>
        </authorList>
    </citation>
    <scope>NUCLEOTIDE SEQUENCE [LARGE SCALE MRNA] (ISOFORM 2)</scope>
    <source>
        <tissue>Heart</tissue>
    </source>
</reference>
<reference key="3">
    <citation type="journal article" date="1996" name="Cell">
        <title>EGL-10 regulates G protein signaling in the C. elegans nervous system and shares a conserved domain with many mammalian proteins.</title>
        <authorList>
            <person name="Koelle M.R."/>
            <person name="Horvitz H.R."/>
        </authorList>
    </citation>
    <scope>NUCLEOTIDE SEQUENCE [MRNA] OF 873-939 (ISOFORM 1)</scope>
    <scope>TISSUE SPECIFICITY</scope>
    <source>
        <tissue>Brain</tissue>
    </source>
</reference>
<reference key="4">
    <citation type="journal article" date="2000" name="J. Biol. Chem.">
        <title>Natriuretic peptides inhibit G protein activation. Mediation through cross-talk between cyclic GMP-dependent protein kinase and regulators of G protein-signaling proteins.</title>
        <authorList>
            <person name="Pedram A."/>
            <person name="Razandi M."/>
            <person name="Kehrl J."/>
            <person name="Levin E.R."/>
        </authorList>
    </citation>
    <scope>PHOSPHORYLATION</scope>
</reference>
<reference key="5">
    <citation type="journal article" date="2012" name="Nat. Commun.">
        <title>Quantitative maps of protein phosphorylation sites across 14 different rat organs and tissues.</title>
        <authorList>
            <person name="Lundby A."/>
            <person name="Secher A."/>
            <person name="Lage K."/>
            <person name="Nordsborg N.B."/>
            <person name="Dmytriyev A."/>
            <person name="Lundby C."/>
            <person name="Olsen J.V."/>
        </authorList>
    </citation>
    <scope>PHOSPHORYLATION [LARGE SCALE ANALYSIS] AT SER-713 AND SER-716</scope>
    <scope>IDENTIFICATION BY MASS SPECTROMETRY [LARGE SCALE ANALYSIS]</scope>
</reference>
<dbReference type="EMBL" id="AB055153">
    <property type="protein sequence ID" value="BAB63460.1"/>
    <property type="molecule type" value="mRNA"/>
</dbReference>
<dbReference type="EMBL" id="BC085710">
    <property type="protein sequence ID" value="AAH85710.1"/>
    <property type="molecule type" value="mRNA"/>
</dbReference>
<dbReference type="EMBL" id="U32434">
    <property type="protein sequence ID" value="AAC52371.1"/>
    <property type="molecule type" value="mRNA"/>
</dbReference>
<dbReference type="RefSeq" id="NP_062213.1">
    <property type="nucleotide sequence ID" value="NM_019340.1"/>
</dbReference>
<dbReference type="RefSeq" id="XP_006238327.1">
    <molecule id="P49797-2"/>
    <property type="nucleotide sequence ID" value="XM_006238265.5"/>
</dbReference>
<dbReference type="SMR" id="P49797"/>
<dbReference type="BioGRID" id="248513">
    <property type="interactions" value="2"/>
</dbReference>
<dbReference type="FunCoup" id="P49797">
    <property type="interactions" value="879"/>
</dbReference>
<dbReference type="STRING" id="10116.ENSRNOP00000071774"/>
<dbReference type="iPTMnet" id="P49797"/>
<dbReference type="PhosphoSitePlus" id="P49797"/>
<dbReference type="PaxDb" id="10116-ENSRNOP00000055954"/>
<dbReference type="GeneID" id="54293"/>
<dbReference type="KEGG" id="rno:54293"/>
<dbReference type="UCSC" id="RGD:3566">
    <molecule id="P49797-1"/>
    <property type="organism name" value="rat"/>
</dbReference>
<dbReference type="AGR" id="RGD:3566"/>
<dbReference type="CTD" id="5998"/>
<dbReference type="RGD" id="3566">
    <property type="gene designation" value="Rgs3"/>
</dbReference>
<dbReference type="VEuPathDB" id="HostDB:ENSRNOG00000024501"/>
<dbReference type="eggNOG" id="KOG3589">
    <property type="taxonomic scope" value="Eukaryota"/>
</dbReference>
<dbReference type="HOGENOM" id="CLU_038537_0_0_1"/>
<dbReference type="InParanoid" id="P49797"/>
<dbReference type="PhylomeDB" id="P49797"/>
<dbReference type="Reactome" id="R-RNO-416476">
    <property type="pathway name" value="G alpha (q) signalling events"/>
</dbReference>
<dbReference type="Reactome" id="R-RNO-418594">
    <property type="pathway name" value="G alpha (i) signalling events"/>
</dbReference>
<dbReference type="PRO" id="PR:P49797"/>
<dbReference type="Proteomes" id="UP000002494">
    <property type="component" value="Chromosome 5"/>
</dbReference>
<dbReference type="Bgee" id="ENSRNOG00000024501">
    <property type="expression patterns" value="Expressed in lung and 20 other cell types or tissues"/>
</dbReference>
<dbReference type="ExpressionAtlas" id="P49797">
    <property type="expression patterns" value="baseline and differential"/>
</dbReference>
<dbReference type="GO" id="GO:0005737">
    <property type="term" value="C:cytoplasm"/>
    <property type="evidence" value="ECO:0007669"/>
    <property type="project" value="UniProtKB-SubCell"/>
</dbReference>
<dbReference type="GO" id="GO:0005634">
    <property type="term" value="C:nucleus"/>
    <property type="evidence" value="ECO:0000266"/>
    <property type="project" value="RGD"/>
</dbReference>
<dbReference type="GO" id="GO:0005886">
    <property type="term" value="C:plasma membrane"/>
    <property type="evidence" value="ECO:0000318"/>
    <property type="project" value="GO_Central"/>
</dbReference>
<dbReference type="GO" id="GO:0009968">
    <property type="term" value="P:negative regulation of signal transduction"/>
    <property type="evidence" value="ECO:0007669"/>
    <property type="project" value="UniProtKB-KW"/>
</dbReference>
<dbReference type="CDD" id="cd06711">
    <property type="entry name" value="PDZ_RGS3-like"/>
    <property type="match status" value="1"/>
</dbReference>
<dbReference type="CDD" id="cd08713">
    <property type="entry name" value="RGS_RGS3"/>
    <property type="match status" value="1"/>
</dbReference>
<dbReference type="FunFam" id="1.10.167.10:FF:000001">
    <property type="entry name" value="Putative regulator of g-protein signaling 12"/>
    <property type="match status" value="1"/>
</dbReference>
<dbReference type="FunFam" id="1.10.196.10:FF:000003">
    <property type="entry name" value="regulator of G-protein signaling 3 isoform X1"/>
    <property type="match status" value="1"/>
</dbReference>
<dbReference type="FunFam" id="2.30.42.10:FF:000098">
    <property type="entry name" value="regulator of G-protein signaling 3 isoform X1"/>
    <property type="match status" value="1"/>
</dbReference>
<dbReference type="FunFam" id="1.10.196.10:FF:000001">
    <property type="entry name" value="Regulator of G-protein signaling 8"/>
    <property type="match status" value="1"/>
</dbReference>
<dbReference type="Gene3D" id="1.10.196.10">
    <property type="match status" value="2"/>
</dbReference>
<dbReference type="Gene3D" id="2.30.42.10">
    <property type="match status" value="1"/>
</dbReference>
<dbReference type="Gene3D" id="2.30.29.30">
    <property type="entry name" value="Pleckstrin-homology domain (PH domain)/Phosphotyrosine-binding domain (PTB)"/>
    <property type="match status" value="1"/>
</dbReference>
<dbReference type="Gene3D" id="1.10.167.10">
    <property type="entry name" value="Regulator of G-protein Signalling 4, domain 2"/>
    <property type="match status" value="1"/>
</dbReference>
<dbReference type="InterPro" id="IPR001478">
    <property type="entry name" value="PDZ"/>
</dbReference>
<dbReference type="InterPro" id="IPR036034">
    <property type="entry name" value="PDZ_sf"/>
</dbReference>
<dbReference type="InterPro" id="IPR011993">
    <property type="entry name" value="PH-like_dom_sf"/>
</dbReference>
<dbReference type="InterPro" id="IPR016137">
    <property type="entry name" value="RGS"/>
</dbReference>
<dbReference type="InterPro" id="IPR034951">
    <property type="entry name" value="RGS_RGS3"/>
</dbReference>
<dbReference type="InterPro" id="IPR036305">
    <property type="entry name" value="RGS_sf"/>
</dbReference>
<dbReference type="InterPro" id="IPR024066">
    <property type="entry name" value="RGS_subdom1/3"/>
</dbReference>
<dbReference type="InterPro" id="IPR044926">
    <property type="entry name" value="RGS_subdomain_2"/>
</dbReference>
<dbReference type="PANTHER" id="PTHR46848">
    <property type="entry name" value="REGULATOR OF G-PROTEIN SIGNALING 3"/>
    <property type="match status" value="1"/>
</dbReference>
<dbReference type="PANTHER" id="PTHR46848:SF1">
    <property type="entry name" value="REGULATOR OF G-PROTEIN SIGNALING 3"/>
    <property type="match status" value="1"/>
</dbReference>
<dbReference type="Pfam" id="PF00595">
    <property type="entry name" value="PDZ"/>
    <property type="match status" value="1"/>
</dbReference>
<dbReference type="Pfam" id="PF00615">
    <property type="entry name" value="RGS"/>
    <property type="match status" value="1"/>
</dbReference>
<dbReference type="PRINTS" id="PR01301">
    <property type="entry name" value="RGSPROTEIN"/>
</dbReference>
<dbReference type="SMART" id="SM00228">
    <property type="entry name" value="PDZ"/>
    <property type="match status" value="1"/>
</dbReference>
<dbReference type="SMART" id="SM00315">
    <property type="entry name" value="RGS"/>
    <property type="match status" value="1"/>
</dbReference>
<dbReference type="SUPFAM" id="SSF50156">
    <property type="entry name" value="PDZ domain-like"/>
    <property type="match status" value="1"/>
</dbReference>
<dbReference type="SUPFAM" id="SSF50729">
    <property type="entry name" value="PH domain-like"/>
    <property type="match status" value="1"/>
</dbReference>
<dbReference type="SUPFAM" id="SSF48097">
    <property type="entry name" value="Regulator of G-protein signaling, RGS"/>
    <property type="match status" value="1"/>
</dbReference>
<dbReference type="PROSITE" id="PS50106">
    <property type="entry name" value="PDZ"/>
    <property type="match status" value="1"/>
</dbReference>
<dbReference type="PROSITE" id="PS50132">
    <property type="entry name" value="RGS"/>
    <property type="match status" value="1"/>
</dbReference>
<name>RGS3_RAT</name>